<organism>
    <name type="scientific">Nomascus leucogenys</name>
    <name type="common">Northern white-cheeked gibbon</name>
    <name type="synonym">Hylobates leucogenys</name>
    <dbReference type="NCBI Taxonomy" id="61853"/>
    <lineage>
        <taxon>Eukaryota</taxon>
        <taxon>Metazoa</taxon>
        <taxon>Chordata</taxon>
        <taxon>Craniata</taxon>
        <taxon>Vertebrata</taxon>
        <taxon>Euteleostomi</taxon>
        <taxon>Mammalia</taxon>
        <taxon>Eutheria</taxon>
        <taxon>Euarchontoglires</taxon>
        <taxon>Primates</taxon>
        <taxon>Haplorrhini</taxon>
        <taxon>Catarrhini</taxon>
        <taxon>Hylobatidae</taxon>
        <taxon>Nomascus</taxon>
    </lineage>
</organism>
<sequence>MATDGASCEPDLSRAPEDAAGAAAEAAKKEFDVDTLSKSELRMLLSVMEGELEARDLVIEALRARRREVFIQERYGRFNLNDPFLALQRDYEAGAGDKEKKPVCTNPLSILEAVMAHCKKMQERMSAQLAAAESRQKKLEMEKLQLQALEQEHKKLAARLEEERGKNKQVVLMLVKECKQLSGKVIEEAQKLEDIMAKLEEEKKKTNELEEELSTEKRRSTEMEAQMEKQLSEFDTEREQLRAKLNREEAHTTDLKEEIDKMKKMIEQLKRGSDSKPSLSLPRKTKDRCLVSISVGTEGTVTRSVACQTDLVTESADHMKKLPLTMPVKPSTGSPLVSANAKGSVCTSATMARPGIDRQPSHGDLIGASVPAFPPPSANRIEENGPSTGSTPDPTSSTPPLPSNAAPPTTQTPGIAPQNSQAPPIHSLHSPCANASLHPGLNPRIQAARFRFQGNANDPDQNGNTTQSPPSRDVSPTSRDNLVAKQLARNTVTQALSRFTSPQAGAPSRPGAPPTGDVGTHPPVGRTSLKTHGVARVDRGNPPPIPPKKPGLSQTPSPPHPQLKVIIDSSRASNTAAKVDNKTVASPPSSLPQGNRVINEENLPKSSSPQLPPKPSIDLTVAPAGCAVSALATSQVGAWPAATPGLNQPACSDSSLVIPTTIAFCSSINPVSASSCRPGASDSLLVTASGWSPSLTPLLMSGGPAPLAGRPTLLQQAAAQGNVTLLSMLLNEEGLDINYSCEDGHSALYSAAKNGHTDCVRLLLSAEAQVNAADKNGFTPLCAAAAQGHFECVELLIAYDANINHAADGGQTPLYLACKNGNKECIKLLLEAGTNRSVKTTDGWTPVHAAVDTGNVDSLKLLMYHRILARGNSFNEEGSESSVFDLDGGEESPEGISKPVVPADLINHANREGWTAAHIAASKGFKNCLEILCRHGGLEPERRDKCNRTVHDVATDDCKHLLENLNALKIPLRISVGEIEPSNYGSDDLECENTICALNIRKQTSWDDFSKAVSQALINHFQAISSDGWWSLEDVTCNNTTDSNIGLSARSIRSITLGNVPWSVGQSFTQSPWDFMRKNKAEHITVLLSGPQEGCLSSVTYASMIPLQMMQNYLRLVEQYHNVIFHGPEGSLQDYIVHQLALCLKHRQMTAGFSCEIVRAEVDAGFSKEQLLDLFISSACLIPVKQSPSKKKIIIILENLEKSSLSELLRDFLAPLENRSTESPCTFQKGNGMSECYYFHENCFLMGTIAKACLQGSDLLVQQHFRWVQLRWDGEPMQGLLQRFLRRKVVNKFKGQAPSPCDPVCKIVDWALSVWRQLNSCLARLGTPEALLGPKYFLSCPVVPGHAQVTVKWMSKLWNGVIAPRVQEAILSRASVKRQPGFGQTTAKRHPSQGQQAVVKAALSILLNKAVLHGCPLPRAELDQHTADFRGGSFPLSIVSSYNSCNKKKGESGAWRKVNTSPRRKSGRFSLPTWNKPDLSTEGMKNKTISQLNCNRNASLSKQKSLENDLSLTLNLDQRLSLGSDDEADLVKELQSMCSSKSESDISKIADSRDDIRMFDSSGNNRVLSATINNLRMPVSQKEVSPLSSHQTTECSNSKSKTELGVSRVKSFLPVPRSKVTQCSQNTKRSSSSSNTRQIEINNNSKEENWNLHKNEHLEKPNK</sequence>
<comment type="function">
    <text evidence="2">Regulates the dendritic spine distribution of CTTN/cortactin in hippocampal neurons, and thus controls dendritic spinogenesis and dendritic spine maintenance. Associates with the striatin-interacting phosphatase and kinase (STRIPAK) core complex to regulate dendritic spine distribution of the STRIPAK complex in hippocampal neurons.</text>
</comment>
<comment type="subunit">
    <text evidence="2">Interacts with CTTN/cortactin SH3 domain. Interacts with STRN, STRN4/zinedin and MOB4/phocein; this interactions mediate the association with the STRIPAK core complex and may regulate dendritic spine distribution of the STRIPAK complex in hippocampal neurons. Activation of glutamate receptors weakens the interaction with STRN and STRN4.</text>
</comment>
<comment type="subcellular location">
    <subcellularLocation>
        <location evidence="1">Cytoplasm</location>
        <location evidence="1">Cell cortex</location>
    </subcellularLocation>
    <subcellularLocation>
        <location evidence="2">Cell projection</location>
        <location evidence="2">Dendritic spine</location>
    </subcellularLocation>
    <text evidence="2">Remains associated with dendritic spines even after glutamate stimulation.</text>
</comment>
<gene>
    <name type="primary">CTTNBP2</name>
    <name type="synonym">CORTBP2</name>
</gene>
<protein>
    <recommendedName>
        <fullName>Cortactin-binding protein 2</fullName>
        <shortName>CortBP2</shortName>
    </recommendedName>
</protein>
<proteinExistence type="inferred from homology"/>
<feature type="chain" id="PRO_0000260407" description="Cortactin-binding protein 2">
    <location>
        <begin position="1"/>
        <end position="1663"/>
    </location>
</feature>
<feature type="repeat" description="ANK 1">
    <location>
        <begin position="709"/>
        <end position="739"/>
    </location>
</feature>
<feature type="repeat" description="ANK 2">
    <location>
        <begin position="743"/>
        <end position="772"/>
    </location>
</feature>
<feature type="repeat" description="ANK 3">
    <location>
        <begin position="776"/>
        <end position="805"/>
    </location>
</feature>
<feature type="repeat" description="ANK 4">
    <location>
        <begin position="809"/>
        <end position="838"/>
    </location>
</feature>
<feature type="repeat" description="ANK 5">
    <location>
        <begin position="842"/>
        <end position="871"/>
    </location>
</feature>
<feature type="repeat" description="ANK 6">
    <location>
        <begin position="912"/>
        <end position="942"/>
    </location>
</feature>
<feature type="region of interest" description="Disordered" evidence="5">
    <location>
        <begin position="1"/>
        <end position="23"/>
    </location>
</feature>
<feature type="region of interest" description="Disordered" evidence="5">
    <location>
        <begin position="203"/>
        <end position="222"/>
    </location>
</feature>
<feature type="region of interest" description="Disordered" evidence="5">
    <location>
        <begin position="352"/>
        <end position="440"/>
    </location>
</feature>
<feature type="region of interest" description="Disordered" evidence="5">
    <location>
        <begin position="454"/>
        <end position="478"/>
    </location>
</feature>
<feature type="region of interest" description="Disordered" evidence="5">
    <location>
        <begin position="498"/>
        <end position="616"/>
    </location>
</feature>
<feature type="region of interest" description="Disordered" evidence="5">
    <location>
        <begin position="876"/>
        <end position="897"/>
    </location>
</feature>
<feature type="region of interest" description="Disordered" evidence="5">
    <location>
        <begin position="1446"/>
        <end position="1485"/>
    </location>
</feature>
<feature type="region of interest" description="Disordered" evidence="5">
    <location>
        <begin position="1580"/>
        <end position="1602"/>
    </location>
</feature>
<feature type="region of interest" description="Disordered" evidence="5">
    <location>
        <begin position="1615"/>
        <end position="1663"/>
    </location>
</feature>
<feature type="coiled-coil region" evidence="4">
    <location>
        <begin position="119"/>
        <end position="276"/>
    </location>
</feature>
<feature type="compositionally biased region" description="Low complexity" evidence="5">
    <location>
        <begin position="384"/>
        <end position="396"/>
    </location>
</feature>
<feature type="compositionally biased region" description="Polar residues" evidence="5">
    <location>
        <begin position="411"/>
        <end position="422"/>
    </location>
</feature>
<feature type="compositionally biased region" description="Polar residues" evidence="5">
    <location>
        <begin position="583"/>
        <end position="593"/>
    </location>
</feature>
<feature type="compositionally biased region" description="Polar residues" evidence="5">
    <location>
        <begin position="1582"/>
        <end position="1599"/>
    </location>
</feature>
<feature type="compositionally biased region" description="Low complexity" evidence="5">
    <location>
        <begin position="1624"/>
        <end position="1638"/>
    </location>
</feature>
<feature type="compositionally biased region" description="Basic and acidic residues" evidence="5">
    <location>
        <begin position="1645"/>
        <end position="1663"/>
    </location>
</feature>
<feature type="modified residue" description="Asymmetric dimethylarginine" evidence="1">
    <location>
        <position position="498"/>
    </location>
</feature>
<feature type="modified residue" description="Phosphoserine" evidence="3">
    <location>
        <position position="1524"/>
    </location>
</feature>
<accession>Q07DX4</accession>
<evidence type="ECO:0000250" key="1">
    <source>
        <dbReference type="UniProtKB" id="B9EJA2"/>
    </source>
</evidence>
<evidence type="ECO:0000250" key="2">
    <source>
        <dbReference type="UniProtKB" id="Q2IBD4"/>
    </source>
</evidence>
<evidence type="ECO:0000250" key="3">
    <source>
        <dbReference type="UniProtKB" id="Q8WZ74"/>
    </source>
</evidence>
<evidence type="ECO:0000255" key="4"/>
<evidence type="ECO:0000256" key="5">
    <source>
        <dbReference type="SAM" id="MobiDB-lite"/>
    </source>
</evidence>
<keyword id="KW-0040">ANK repeat</keyword>
<keyword id="KW-0966">Cell projection</keyword>
<keyword id="KW-0175">Coiled coil</keyword>
<keyword id="KW-0963">Cytoplasm</keyword>
<keyword id="KW-0488">Methylation</keyword>
<keyword id="KW-0597">Phosphoprotein</keyword>
<keyword id="KW-1185">Reference proteome</keyword>
<keyword id="KW-0677">Repeat</keyword>
<keyword id="KW-0770">Synapse</keyword>
<reference key="1">
    <citation type="submission" date="2006-09" db="EMBL/GenBank/DDBJ databases">
        <title>NISC comparative sequencing initiative.</title>
        <authorList>
            <person name="Antonellis A."/>
            <person name="Ayele K."/>
            <person name="Benjamin B."/>
            <person name="Blakesley R.W."/>
            <person name="Boakye A."/>
            <person name="Bouffard G.G."/>
            <person name="Brinkley C."/>
            <person name="Brooks S."/>
            <person name="Chu G."/>
            <person name="Coleman H."/>
            <person name="Engle J."/>
            <person name="Gestole M."/>
            <person name="Greene A."/>
            <person name="Guan X."/>
            <person name="Gupta J."/>
            <person name="Haghighi P."/>
            <person name="Han J."/>
            <person name="Hansen N."/>
            <person name="Ho S.-L."/>
            <person name="Hu P."/>
            <person name="Hunter G."/>
            <person name="Hurle B."/>
            <person name="Idol J.R."/>
            <person name="Kwong P."/>
            <person name="Laric P."/>
            <person name="Larson S."/>
            <person name="Lee-Lin S.-Q."/>
            <person name="Legaspi R."/>
            <person name="Madden M."/>
            <person name="Maduro Q.L."/>
            <person name="Maduro V.B."/>
            <person name="Margulies E.H."/>
            <person name="Masiello C."/>
            <person name="Maskeri B."/>
            <person name="McDowell J."/>
            <person name="Mojidi H.A."/>
            <person name="Mullikin J.C."/>
            <person name="Oestreicher J.S."/>
            <person name="Park M."/>
            <person name="Portnoy M.E."/>
            <person name="Prasad A."/>
            <person name="Puri O."/>
            <person name="Reddix-Dugue N."/>
            <person name="Schandler K."/>
            <person name="Schueler M.G."/>
            <person name="Sison C."/>
            <person name="Stantripop S."/>
            <person name="Stephen E."/>
            <person name="Taye A."/>
            <person name="Thomas J.W."/>
            <person name="Thomas P.J."/>
            <person name="Tsipouri V."/>
            <person name="Ung L."/>
            <person name="Vogt J.L."/>
            <person name="Wetherby K.D."/>
            <person name="Young A."/>
            <person name="Green E.D."/>
        </authorList>
    </citation>
    <scope>NUCLEOTIDE SEQUENCE [LARGE SCALE GENOMIC DNA]</scope>
</reference>
<dbReference type="EMBL" id="DP000194">
    <property type="protein sequence ID" value="ABJ08868.1"/>
    <property type="molecule type" value="Genomic_DNA"/>
</dbReference>
<dbReference type="SMR" id="Q07DX4"/>
<dbReference type="FunCoup" id="Q07DX4">
    <property type="interactions" value="108"/>
</dbReference>
<dbReference type="STRING" id="61853.ENSNLEP00000014299"/>
<dbReference type="eggNOG" id="ENOG502QWG2">
    <property type="taxonomic scope" value="Eukaryota"/>
</dbReference>
<dbReference type="InParanoid" id="Q07DX4"/>
<dbReference type="Proteomes" id="UP000001073">
    <property type="component" value="Unplaced"/>
</dbReference>
<dbReference type="GO" id="GO:0015629">
    <property type="term" value="C:actin cytoskeleton"/>
    <property type="evidence" value="ECO:0007669"/>
    <property type="project" value="TreeGrafter"/>
</dbReference>
<dbReference type="GO" id="GO:0005938">
    <property type="term" value="C:cell cortex"/>
    <property type="evidence" value="ECO:0007669"/>
    <property type="project" value="UniProtKB-SubCell"/>
</dbReference>
<dbReference type="GO" id="GO:0043197">
    <property type="term" value="C:dendritic spine"/>
    <property type="evidence" value="ECO:0000250"/>
    <property type="project" value="UniProtKB"/>
</dbReference>
<dbReference type="GO" id="GO:0090443">
    <property type="term" value="C:FAR/SIN/STRIPAK complex"/>
    <property type="evidence" value="ECO:0000250"/>
    <property type="project" value="UniProtKB"/>
</dbReference>
<dbReference type="GO" id="GO:0051721">
    <property type="term" value="F:protein phosphatase 2A binding"/>
    <property type="evidence" value="ECO:0007669"/>
    <property type="project" value="TreeGrafter"/>
</dbReference>
<dbReference type="Gene3D" id="1.25.40.20">
    <property type="entry name" value="Ankyrin repeat-containing domain"/>
    <property type="match status" value="1"/>
</dbReference>
<dbReference type="InterPro" id="IPR002110">
    <property type="entry name" value="Ankyrin_rpt"/>
</dbReference>
<dbReference type="InterPro" id="IPR036770">
    <property type="entry name" value="Ankyrin_rpt-contain_sf"/>
</dbReference>
<dbReference type="InterPro" id="IPR050719">
    <property type="entry name" value="Cortactin-Actin_Reg"/>
</dbReference>
<dbReference type="InterPro" id="IPR019131">
    <property type="entry name" value="Cortactin-binding_p2_N"/>
</dbReference>
<dbReference type="PANTHER" id="PTHR23166:SF9">
    <property type="entry name" value="CTTNBP2 N-TERMINAL-LIKE PROTEIN"/>
    <property type="match status" value="1"/>
</dbReference>
<dbReference type="PANTHER" id="PTHR23166">
    <property type="entry name" value="FILAMIN/GPBP-INTERACTING PROTEIN"/>
    <property type="match status" value="1"/>
</dbReference>
<dbReference type="Pfam" id="PF25408">
    <property type="entry name" value="AAA_lid_NAV1"/>
    <property type="match status" value="1"/>
</dbReference>
<dbReference type="Pfam" id="PF12796">
    <property type="entry name" value="Ank_2"/>
    <property type="match status" value="2"/>
</dbReference>
<dbReference type="Pfam" id="PF09727">
    <property type="entry name" value="CortBP2"/>
    <property type="match status" value="1"/>
</dbReference>
<dbReference type="SMART" id="SM00248">
    <property type="entry name" value="ANK"/>
    <property type="match status" value="6"/>
</dbReference>
<dbReference type="SUPFAM" id="SSF48403">
    <property type="entry name" value="Ankyrin repeat"/>
    <property type="match status" value="1"/>
</dbReference>
<dbReference type="PROSITE" id="PS50297">
    <property type="entry name" value="ANK_REP_REGION"/>
    <property type="match status" value="1"/>
</dbReference>
<dbReference type="PROSITE" id="PS50088">
    <property type="entry name" value="ANK_REPEAT"/>
    <property type="match status" value="4"/>
</dbReference>
<name>CTTB2_NOMLE</name>